<reference key="1">
    <citation type="journal article" date="2013" name="Nature">
        <title>The zebrafish reference genome sequence and its relationship to the human genome.</title>
        <authorList>
            <person name="Howe K."/>
            <person name="Clark M.D."/>
            <person name="Torroja C.F."/>
            <person name="Torrance J."/>
            <person name="Berthelot C."/>
            <person name="Muffato M."/>
            <person name="Collins J.E."/>
            <person name="Humphray S."/>
            <person name="McLaren K."/>
            <person name="Matthews L."/>
            <person name="McLaren S."/>
            <person name="Sealy I."/>
            <person name="Caccamo M."/>
            <person name="Churcher C."/>
            <person name="Scott C."/>
            <person name="Barrett J.C."/>
            <person name="Koch R."/>
            <person name="Rauch G.J."/>
            <person name="White S."/>
            <person name="Chow W."/>
            <person name="Kilian B."/>
            <person name="Quintais L.T."/>
            <person name="Guerra-Assuncao J.A."/>
            <person name="Zhou Y."/>
            <person name="Gu Y."/>
            <person name="Yen J."/>
            <person name="Vogel J.H."/>
            <person name="Eyre T."/>
            <person name="Redmond S."/>
            <person name="Banerjee R."/>
            <person name="Chi J."/>
            <person name="Fu B."/>
            <person name="Langley E."/>
            <person name="Maguire S.F."/>
            <person name="Laird G.K."/>
            <person name="Lloyd D."/>
            <person name="Kenyon E."/>
            <person name="Donaldson S."/>
            <person name="Sehra H."/>
            <person name="Almeida-King J."/>
            <person name="Loveland J."/>
            <person name="Trevanion S."/>
            <person name="Jones M."/>
            <person name="Quail M."/>
            <person name="Willey D."/>
            <person name="Hunt A."/>
            <person name="Burton J."/>
            <person name="Sims S."/>
            <person name="McLay K."/>
            <person name="Plumb B."/>
            <person name="Davis J."/>
            <person name="Clee C."/>
            <person name="Oliver K."/>
            <person name="Clark R."/>
            <person name="Riddle C."/>
            <person name="Elliot D."/>
            <person name="Threadgold G."/>
            <person name="Harden G."/>
            <person name="Ware D."/>
            <person name="Begum S."/>
            <person name="Mortimore B."/>
            <person name="Kerry G."/>
            <person name="Heath P."/>
            <person name="Phillimore B."/>
            <person name="Tracey A."/>
            <person name="Corby N."/>
            <person name="Dunn M."/>
            <person name="Johnson C."/>
            <person name="Wood J."/>
            <person name="Clark S."/>
            <person name="Pelan S."/>
            <person name="Griffiths G."/>
            <person name="Smith M."/>
            <person name="Glithero R."/>
            <person name="Howden P."/>
            <person name="Barker N."/>
            <person name="Lloyd C."/>
            <person name="Stevens C."/>
            <person name="Harley J."/>
            <person name="Holt K."/>
            <person name="Panagiotidis G."/>
            <person name="Lovell J."/>
            <person name="Beasley H."/>
            <person name="Henderson C."/>
            <person name="Gordon D."/>
            <person name="Auger K."/>
            <person name="Wright D."/>
            <person name="Collins J."/>
            <person name="Raisen C."/>
            <person name="Dyer L."/>
            <person name="Leung K."/>
            <person name="Robertson L."/>
            <person name="Ambridge K."/>
            <person name="Leongamornlert D."/>
            <person name="McGuire S."/>
            <person name="Gilderthorp R."/>
            <person name="Griffiths C."/>
            <person name="Manthravadi D."/>
            <person name="Nichol S."/>
            <person name="Barker G."/>
            <person name="Whitehead S."/>
            <person name="Kay M."/>
            <person name="Brown J."/>
            <person name="Murnane C."/>
            <person name="Gray E."/>
            <person name="Humphries M."/>
            <person name="Sycamore N."/>
            <person name="Barker D."/>
            <person name="Saunders D."/>
            <person name="Wallis J."/>
            <person name="Babbage A."/>
            <person name="Hammond S."/>
            <person name="Mashreghi-Mohammadi M."/>
            <person name="Barr L."/>
            <person name="Martin S."/>
            <person name="Wray P."/>
            <person name="Ellington A."/>
            <person name="Matthews N."/>
            <person name="Ellwood M."/>
            <person name="Woodmansey R."/>
            <person name="Clark G."/>
            <person name="Cooper J."/>
            <person name="Tromans A."/>
            <person name="Grafham D."/>
            <person name="Skuce C."/>
            <person name="Pandian R."/>
            <person name="Andrews R."/>
            <person name="Harrison E."/>
            <person name="Kimberley A."/>
            <person name="Garnett J."/>
            <person name="Fosker N."/>
            <person name="Hall R."/>
            <person name="Garner P."/>
            <person name="Kelly D."/>
            <person name="Bird C."/>
            <person name="Palmer S."/>
            <person name="Gehring I."/>
            <person name="Berger A."/>
            <person name="Dooley C.M."/>
            <person name="Ersan-Urun Z."/>
            <person name="Eser C."/>
            <person name="Geiger H."/>
            <person name="Geisler M."/>
            <person name="Karotki L."/>
            <person name="Kirn A."/>
            <person name="Konantz J."/>
            <person name="Konantz M."/>
            <person name="Oberlander M."/>
            <person name="Rudolph-Geiger S."/>
            <person name="Teucke M."/>
            <person name="Lanz C."/>
            <person name="Raddatz G."/>
            <person name="Osoegawa K."/>
            <person name="Zhu B."/>
            <person name="Rapp A."/>
            <person name="Widaa S."/>
            <person name="Langford C."/>
            <person name="Yang F."/>
            <person name="Schuster S.C."/>
            <person name="Carter N.P."/>
            <person name="Harrow J."/>
            <person name="Ning Z."/>
            <person name="Herrero J."/>
            <person name="Searle S.M."/>
            <person name="Enright A."/>
            <person name="Geisler R."/>
            <person name="Plasterk R.H."/>
            <person name="Lee C."/>
            <person name="Westerfield M."/>
            <person name="de Jong P.J."/>
            <person name="Zon L.I."/>
            <person name="Postlethwait J.H."/>
            <person name="Nusslein-Volhard C."/>
            <person name="Hubbard T.J."/>
            <person name="Roest Crollius H."/>
            <person name="Rogers J."/>
            <person name="Stemple D.L."/>
        </authorList>
    </citation>
    <scope>NUCLEOTIDE SEQUENCE [LARGE SCALE GENOMIC DNA]</scope>
    <source>
        <strain>Tuebingen</strain>
    </source>
</reference>
<reference evidence="4" key="2">
    <citation type="submission" date="2008-04" db="EMBL/GenBank/DDBJ databases">
        <authorList>
            <consortium name="NIH - Zebrafish Gene Collection (ZGC) project"/>
        </authorList>
    </citation>
    <scope>NUCLEOTIDE SEQUENCE [LARGE SCALE MRNA] (ISOFORM 2)</scope>
    <source>
        <strain>AB</strain>
    </source>
</reference>
<reference evidence="4" key="3">
    <citation type="journal article" date="2002" name="J. Mol. Evol.">
        <title>Evolution of duplicated reggie genes in zebrafish and goldfish.</title>
        <authorList>
            <person name="Malaga-Trillo E."/>
            <person name="Laessing U."/>
            <person name="Lang D.M."/>
            <person name="Meyer A."/>
            <person name="Stuermer C.A.O."/>
        </authorList>
    </citation>
    <scope>NUCLEOTIDE SEQUENCE [GENOMIC DNA] OF 35-428</scope>
</reference>
<name>FLOT2_DANRE</name>
<organism evidence="5">
    <name type="scientific">Danio rerio</name>
    <name type="common">Zebrafish</name>
    <name type="synonym">Brachydanio rerio</name>
    <dbReference type="NCBI Taxonomy" id="7955"/>
    <lineage>
        <taxon>Eukaryota</taxon>
        <taxon>Metazoa</taxon>
        <taxon>Chordata</taxon>
        <taxon>Craniata</taxon>
        <taxon>Vertebrata</taxon>
        <taxon>Euteleostomi</taxon>
        <taxon>Actinopterygii</taxon>
        <taxon>Neopterygii</taxon>
        <taxon>Teleostei</taxon>
        <taxon>Ostariophysi</taxon>
        <taxon>Cypriniformes</taxon>
        <taxon>Danionidae</taxon>
        <taxon>Danioninae</taxon>
        <taxon>Danio</taxon>
    </lineage>
</organism>
<feature type="chain" id="PRO_0000094052" description="Flotillin-2a">
    <location>
        <begin position="1"/>
        <end position="428"/>
    </location>
</feature>
<feature type="lipid moiety-binding region" description="S-palmitoyl cysteine" evidence="1">
    <location>
        <position position="4"/>
    </location>
</feature>
<feature type="lipid moiety-binding region" description="S-palmitoyl cysteine" evidence="1">
    <location>
        <position position="19"/>
    </location>
</feature>
<feature type="lipid moiety-binding region" description="S-palmitoyl cysteine" evidence="1">
    <location>
        <position position="20"/>
    </location>
</feature>
<feature type="splice variant" id="VSP_038473" description="In isoform 2." evidence="3">
    <original>EAEKIKRIGEAE</original>
    <variation>VFFQLIVSIQIM</variation>
    <location>
        <begin position="315"/>
        <end position="326"/>
    </location>
</feature>
<feature type="splice variant" id="VSP_038474" description="In isoform 2." evidence="3">
    <location>
        <begin position="327"/>
        <end position="428"/>
    </location>
</feature>
<feature type="sequence conflict" description="In Ref. 1; AAI65232/BC044499." evidence="4" ref="1">
    <original>N</original>
    <variation>I</variation>
    <location>
        <position position="231"/>
    </location>
</feature>
<proteinExistence type="evidence at transcript level"/>
<dbReference type="EMBL" id="BX323596">
    <property type="status" value="NOT_ANNOTATED_CDS"/>
    <property type="molecule type" value="Genomic_DNA"/>
</dbReference>
<dbReference type="EMBL" id="BC044499">
    <property type="status" value="NOT_ANNOTATED_CDS"/>
    <property type="molecule type" value="mRNA"/>
</dbReference>
<dbReference type="EMBL" id="BC165232">
    <property type="protein sequence ID" value="AAI65232.1"/>
    <property type="status" value="ALT_SEQ"/>
    <property type="molecule type" value="mRNA"/>
</dbReference>
<dbReference type="EMBL" id="AF315945">
    <property type="protein sequence ID" value="AAK07564.1"/>
    <property type="molecule type" value="Genomic_DNA"/>
</dbReference>
<dbReference type="RefSeq" id="NP_998240.2">
    <molecule id="Q98TZ8-1"/>
    <property type="nucleotide sequence ID" value="NM_213075.2"/>
</dbReference>
<dbReference type="SMR" id="Q98TZ8"/>
<dbReference type="FunCoup" id="Q98TZ8">
    <property type="interactions" value="14"/>
</dbReference>
<dbReference type="STRING" id="7955.ENSDARP00000011656"/>
<dbReference type="PaxDb" id="7955-ENSDARP00000011656"/>
<dbReference type="Ensembl" id="ENSDART00000003947">
    <molecule id="Q98TZ8-1"/>
    <property type="protein sequence ID" value="ENSDARP00000011656"/>
    <property type="gene ID" value="ENSDARG00000004830"/>
</dbReference>
<dbReference type="GeneID" id="245698"/>
<dbReference type="KEGG" id="dre:245698"/>
<dbReference type="AGR" id="ZFIN:ZDB-GENE-020430-3"/>
<dbReference type="CTD" id="245698"/>
<dbReference type="ZFIN" id="ZDB-GENE-020430-3">
    <property type="gene designation" value="flot2a"/>
</dbReference>
<dbReference type="eggNOG" id="KOG2668">
    <property type="taxonomic scope" value="Eukaryota"/>
</dbReference>
<dbReference type="HOGENOM" id="CLU_038134_1_0_1"/>
<dbReference type="InParanoid" id="Q98TZ8"/>
<dbReference type="OMA" id="MWRVAEP"/>
<dbReference type="OrthoDB" id="6080404at2759"/>
<dbReference type="PhylomeDB" id="Q98TZ8"/>
<dbReference type="TreeFam" id="TF324879"/>
<dbReference type="Reactome" id="R-DRE-8849932">
    <property type="pathway name" value="Synaptic adhesion-like molecules"/>
</dbReference>
<dbReference type="Reactome" id="R-DRE-8980692">
    <property type="pathway name" value="RHOA GTPase cycle"/>
</dbReference>
<dbReference type="Reactome" id="R-DRE-9696264">
    <property type="pathway name" value="RND3 GTPase cycle"/>
</dbReference>
<dbReference type="Reactome" id="R-DRE-9696273">
    <property type="pathway name" value="RND1 GTPase cycle"/>
</dbReference>
<dbReference type="PRO" id="PR:Q98TZ8"/>
<dbReference type="Proteomes" id="UP000000437">
    <property type="component" value="Chromosome 5"/>
</dbReference>
<dbReference type="Bgee" id="ENSDARG00000004830">
    <property type="expression patterns" value="Expressed in retina and 48 other cell types or tissues"/>
</dbReference>
<dbReference type="ExpressionAtlas" id="Q98TZ8">
    <property type="expression patterns" value="baseline and differential"/>
</dbReference>
<dbReference type="GO" id="GO:0031410">
    <property type="term" value="C:cytoplasmic vesicle"/>
    <property type="evidence" value="ECO:0000318"/>
    <property type="project" value="GO_Central"/>
</dbReference>
<dbReference type="GO" id="GO:0030139">
    <property type="term" value="C:endocytic vesicle"/>
    <property type="evidence" value="ECO:0000250"/>
    <property type="project" value="UniProtKB"/>
</dbReference>
<dbReference type="GO" id="GO:0005768">
    <property type="term" value="C:endosome"/>
    <property type="evidence" value="ECO:0000250"/>
    <property type="project" value="UniProtKB"/>
</dbReference>
<dbReference type="GO" id="GO:0016600">
    <property type="term" value="C:flotillin complex"/>
    <property type="evidence" value="ECO:0000318"/>
    <property type="project" value="GO_Central"/>
</dbReference>
<dbReference type="GO" id="GO:0005886">
    <property type="term" value="C:plasma membrane"/>
    <property type="evidence" value="ECO:0000318"/>
    <property type="project" value="GO_Central"/>
</dbReference>
<dbReference type="GO" id="GO:0002020">
    <property type="term" value="F:protease binding"/>
    <property type="evidence" value="ECO:0000318"/>
    <property type="project" value="GO_Central"/>
</dbReference>
<dbReference type="GO" id="GO:0007155">
    <property type="term" value="P:cell adhesion"/>
    <property type="evidence" value="ECO:0007669"/>
    <property type="project" value="UniProtKB-KW"/>
</dbReference>
<dbReference type="GO" id="GO:0072659">
    <property type="term" value="P:protein localization to plasma membrane"/>
    <property type="evidence" value="ECO:0000318"/>
    <property type="project" value="GO_Central"/>
</dbReference>
<dbReference type="GO" id="GO:2000047">
    <property type="term" value="P:regulation of cell-cell adhesion mediated by cadherin"/>
    <property type="evidence" value="ECO:0000315"/>
    <property type="project" value="ZFIN"/>
</dbReference>
<dbReference type="GO" id="GO:1904086">
    <property type="term" value="P:regulation of epiboly involved in gastrulation with mouth forming second"/>
    <property type="evidence" value="ECO:0000315"/>
    <property type="project" value="ZFIN"/>
</dbReference>
<dbReference type="GO" id="GO:0045661">
    <property type="term" value="P:regulation of myoblast differentiation"/>
    <property type="evidence" value="ECO:0000318"/>
    <property type="project" value="GO_Central"/>
</dbReference>
<dbReference type="CDD" id="cd03399">
    <property type="entry name" value="SPFH_flotillin"/>
    <property type="match status" value="1"/>
</dbReference>
<dbReference type="FunFam" id="3.30.479.30:FF:000003">
    <property type="entry name" value="Flotillin 2"/>
    <property type="match status" value="1"/>
</dbReference>
<dbReference type="Gene3D" id="3.30.479.30">
    <property type="entry name" value="Band 7 domain"/>
    <property type="match status" value="1"/>
</dbReference>
<dbReference type="InterPro" id="IPR001107">
    <property type="entry name" value="Band_7"/>
</dbReference>
<dbReference type="InterPro" id="IPR036013">
    <property type="entry name" value="Band_7/SPFH_dom_sf"/>
</dbReference>
<dbReference type="InterPro" id="IPR031905">
    <property type="entry name" value="Flotillin_C"/>
</dbReference>
<dbReference type="InterPro" id="IPR027705">
    <property type="entry name" value="Flotillin_fam"/>
</dbReference>
<dbReference type="PANTHER" id="PTHR13806:SF46">
    <property type="entry name" value="FLOTILLIN-1-RELATED"/>
    <property type="match status" value="1"/>
</dbReference>
<dbReference type="PANTHER" id="PTHR13806">
    <property type="entry name" value="FLOTILLIN-RELATED"/>
    <property type="match status" value="1"/>
</dbReference>
<dbReference type="Pfam" id="PF01145">
    <property type="entry name" value="Band_7"/>
    <property type="match status" value="1"/>
</dbReference>
<dbReference type="Pfam" id="PF15975">
    <property type="entry name" value="Flot"/>
    <property type="match status" value="1"/>
</dbReference>
<dbReference type="SMART" id="SM00244">
    <property type="entry name" value="PHB"/>
    <property type="match status" value="1"/>
</dbReference>
<dbReference type="SUPFAM" id="SSF117892">
    <property type="entry name" value="Band 7/SPFH domain"/>
    <property type="match status" value="1"/>
</dbReference>
<evidence type="ECO:0000250" key="1"/>
<evidence type="ECO:0000250" key="2">
    <source>
        <dbReference type="UniProtKB" id="Q9Z2S9"/>
    </source>
</evidence>
<evidence type="ECO:0000303" key="3">
    <source ref="2"/>
</evidence>
<evidence type="ECO:0000305" key="4"/>
<evidence type="ECO:0000312" key="5">
    <source>
        <dbReference type="EMBL" id="AAK07564.1"/>
    </source>
</evidence>
<comment type="function">
    <text evidence="2">May play a role in axon growth and regeneration. May be involved in epidermal cell adhesion and epidermal structure and function (By similarity).</text>
</comment>
<comment type="subunit">
    <text evidence="1">Heterooligomer; Heterooligomerizes with ic complex of flotillins 1 and 2.</text>
</comment>
<comment type="subcellular location">
    <subcellularLocation>
        <location evidence="1">Membrane</location>
    </subcellularLocation>
    <subcellularLocation>
        <location evidence="1">Endosome</location>
    </subcellularLocation>
    <text evidence="1">In neuronal cells, associated with GPI-anchored cell-adhesion molecules.</text>
</comment>
<comment type="alternative products">
    <event type="alternative splicing"/>
    <isoform>
        <id>Q98TZ8-1</id>
        <name>1</name>
        <sequence type="displayed"/>
    </isoform>
    <isoform>
        <id>Q98TZ8-2</id>
        <name>2</name>
        <sequence type="described" ref="VSP_038473 VSP_038474"/>
    </isoform>
</comment>
<comment type="PTM">
    <text evidence="1">Palmitoylation may be required for the formation of higher order complexes and for neurite outgrowth in cultured neural stem cells.</text>
</comment>
<comment type="similarity">
    <text evidence="4">Belongs to the band 7/mec-2 family. Flotillin subfamily.</text>
</comment>
<comment type="sequence caution" evidence="4">
    <conflict type="miscellaneous discrepancy">
        <sequence resource="EMBL-CDS" id="AAI65232"/>
    </conflict>
    <text>Contaminating sequence. Sequence of unknown origin in the N-terminal part.</text>
</comment>
<comment type="sequence caution" evidence="4">
    <conflict type="miscellaneous discrepancy">
        <sequence resource="EMBL" id="BC044499"/>
    </conflict>
    <text>Intron retention.</text>
</comment>
<sequence>MGNCYTVGPNEALVVSGGCCGSDGKTYTVGGWAWAWWLITDIQKITLEIMTLQPKCEDVETAEGVAITVTGVAQVKVMTDNELLGYACEQFLGKTVTEIKSVILQTLEGHLRSILGTLTVEQIYQDRDQFAKLVREVAAPDVGRMGIEILSFTIKDVYDKVDYLSSLGKSQTAAVQRDADIGVAEAERDAGIREAECKKEMMDIKFQADTKMADSKRELEMQKAAFNQEVNTKKAEAQLAYELQAAKEQQKIRLEEIEIEVVQRKKQISIEEKEILRTDKELIATVRRPAEAEAFKMEQLAEAKKIKKVLTAQAEAEKIKRIGEAEAGSIEAVGKAEAEKMRLKAEAYQQYGEAAKTALVLEALPKIAGKVAAPLGRTNEIVILSGDGGRVTGEVNRLLAELPVSVNALTGVDLSKIPLLQKMTNPQA</sequence>
<accession>Q98TZ8</accession>
<accession>B5DDN8</accession>
<accession>Q803F9</accession>
<protein>
    <recommendedName>
        <fullName>Flotillin-2a</fullName>
    </recommendedName>
    <alternativeName>
        <fullName>Reggie-1a</fullName>
        <shortName>REG-1</shortName>
    </alternativeName>
</protein>
<keyword id="KW-0025">Alternative splicing</keyword>
<keyword id="KW-0130">Cell adhesion</keyword>
<keyword id="KW-0967">Endosome</keyword>
<keyword id="KW-0449">Lipoprotein</keyword>
<keyword id="KW-0472">Membrane</keyword>
<keyword id="KW-0564">Palmitate</keyword>
<keyword id="KW-1185">Reference proteome</keyword>
<gene>
    <name type="primary">flot2a</name>
</gene>